<dbReference type="EMBL" id="FM211192">
    <property type="protein sequence ID" value="CAR71936.1"/>
    <property type="molecule type" value="Genomic_DNA"/>
</dbReference>
<dbReference type="SMR" id="B8ZSA0"/>
<dbReference type="KEGG" id="mlb:MLBr01840"/>
<dbReference type="HOGENOM" id="CLU_055188_4_1_11"/>
<dbReference type="Proteomes" id="UP000006900">
    <property type="component" value="Chromosome"/>
</dbReference>
<dbReference type="GO" id="GO:0022625">
    <property type="term" value="C:cytosolic large ribosomal subunit"/>
    <property type="evidence" value="ECO:0007669"/>
    <property type="project" value="TreeGrafter"/>
</dbReference>
<dbReference type="GO" id="GO:0019843">
    <property type="term" value="F:rRNA binding"/>
    <property type="evidence" value="ECO:0007669"/>
    <property type="project" value="UniProtKB-UniRule"/>
</dbReference>
<dbReference type="GO" id="GO:0003735">
    <property type="term" value="F:structural constituent of ribosome"/>
    <property type="evidence" value="ECO:0007669"/>
    <property type="project" value="InterPro"/>
</dbReference>
<dbReference type="GO" id="GO:0006412">
    <property type="term" value="P:translation"/>
    <property type="evidence" value="ECO:0007669"/>
    <property type="project" value="UniProtKB-UniRule"/>
</dbReference>
<dbReference type="FunFam" id="3.100.10.10:FF:000005">
    <property type="entry name" value="50S ribosomal protein L15"/>
    <property type="match status" value="1"/>
</dbReference>
<dbReference type="Gene3D" id="3.100.10.10">
    <property type="match status" value="1"/>
</dbReference>
<dbReference type="HAMAP" id="MF_01341">
    <property type="entry name" value="Ribosomal_uL15"/>
    <property type="match status" value="1"/>
</dbReference>
<dbReference type="InterPro" id="IPR030878">
    <property type="entry name" value="Ribosomal_uL15"/>
</dbReference>
<dbReference type="InterPro" id="IPR021131">
    <property type="entry name" value="Ribosomal_uL15/eL18"/>
</dbReference>
<dbReference type="InterPro" id="IPR036227">
    <property type="entry name" value="Ribosomal_uL15/eL18_sf"/>
</dbReference>
<dbReference type="InterPro" id="IPR005749">
    <property type="entry name" value="Ribosomal_uL15_bac-type"/>
</dbReference>
<dbReference type="InterPro" id="IPR001196">
    <property type="entry name" value="Ribosomal_uL15_CS"/>
</dbReference>
<dbReference type="NCBIfam" id="TIGR01071">
    <property type="entry name" value="rplO_bact"/>
    <property type="match status" value="1"/>
</dbReference>
<dbReference type="PANTHER" id="PTHR12934">
    <property type="entry name" value="50S RIBOSOMAL PROTEIN L15"/>
    <property type="match status" value="1"/>
</dbReference>
<dbReference type="PANTHER" id="PTHR12934:SF11">
    <property type="entry name" value="LARGE RIBOSOMAL SUBUNIT PROTEIN UL15M"/>
    <property type="match status" value="1"/>
</dbReference>
<dbReference type="Pfam" id="PF00828">
    <property type="entry name" value="Ribosomal_L27A"/>
    <property type="match status" value="1"/>
</dbReference>
<dbReference type="SUPFAM" id="SSF52080">
    <property type="entry name" value="Ribosomal proteins L15p and L18e"/>
    <property type="match status" value="1"/>
</dbReference>
<dbReference type="PROSITE" id="PS00475">
    <property type="entry name" value="RIBOSOMAL_L15"/>
    <property type="match status" value="1"/>
</dbReference>
<gene>
    <name evidence="1" type="primary">rplO</name>
    <name type="ordered locus">MLBr01840</name>
</gene>
<keyword id="KW-0687">Ribonucleoprotein</keyword>
<keyword id="KW-0689">Ribosomal protein</keyword>
<keyword id="KW-0694">RNA-binding</keyword>
<keyword id="KW-0699">rRNA-binding</keyword>
<reference key="1">
    <citation type="journal article" date="2009" name="Nat. Genet.">
        <title>Comparative genomic and phylogeographic analysis of Mycobacterium leprae.</title>
        <authorList>
            <person name="Monot M."/>
            <person name="Honore N."/>
            <person name="Garnier T."/>
            <person name="Zidane N."/>
            <person name="Sherafi D."/>
            <person name="Paniz-Mondolfi A."/>
            <person name="Matsuoka M."/>
            <person name="Taylor G.M."/>
            <person name="Donoghue H.D."/>
            <person name="Bouwman A."/>
            <person name="Mays S."/>
            <person name="Watson C."/>
            <person name="Lockwood D."/>
            <person name="Khamispour A."/>
            <person name="Dowlati Y."/>
            <person name="Jianping S."/>
            <person name="Rea T.H."/>
            <person name="Vera-Cabrera L."/>
            <person name="Stefani M.M."/>
            <person name="Banu S."/>
            <person name="Macdonald M."/>
            <person name="Sapkota B.R."/>
            <person name="Spencer J.S."/>
            <person name="Thomas J."/>
            <person name="Harshman K."/>
            <person name="Singh P."/>
            <person name="Busso P."/>
            <person name="Gattiker A."/>
            <person name="Rougemont J."/>
            <person name="Brennan P.J."/>
            <person name="Cole S.T."/>
        </authorList>
    </citation>
    <scope>NUCLEOTIDE SEQUENCE [LARGE SCALE GENOMIC DNA]</scope>
    <source>
        <strain>Br4923</strain>
    </source>
</reference>
<comment type="function">
    <text evidence="1">Binds to the 23S rRNA.</text>
</comment>
<comment type="subunit">
    <text evidence="1">Part of the 50S ribosomal subunit.</text>
</comment>
<comment type="similarity">
    <text evidence="1">Belongs to the universal ribosomal protein uL15 family.</text>
</comment>
<protein>
    <recommendedName>
        <fullName evidence="1">Large ribosomal subunit protein uL15</fullName>
    </recommendedName>
    <alternativeName>
        <fullName evidence="3">50S ribosomal protein L15</fullName>
    </alternativeName>
</protein>
<feature type="chain" id="PRO_1000166308" description="Large ribosomal subunit protein uL15">
    <location>
        <begin position="1"/>
        <end position="146"/>
    </location>
</feature>
<feature type="region of interest" description="Disordered" evidence="2">
    <location>
        <begin position="1"/>
        <end position="42"/>
    </location>
</feature>
<organism>
    <name type="scientific">Mycobacterium leprae (strain Br4923)</name>
    <dbReference type="NCBI Taxonomy" id="561304"/>
    <lineage>
        <taxon>Bacteria</taxon>
        <taxon>Bacillati</taxon>
        <taxon>Actinomycetota</taxon>
        <taxon>Actinomycetes</taxon>
        <taxon>Mycobacteriales</taxon>
        <taxon>Mycobacteriaceae</taxon>
        <taxon>Mycobacterium</taxon>
    </lineage>
</organism>
<proteinExistence type="inferred from homology"/>
<accession>B8ZSA0</accession>
<evidence type="ECO:0000255" key="1">
    <source>
        <dbReference type="HAMAP-Rule" id="MF_01341"/>
    </source>
</evidence>
<evidence type="ECO:0000256" key="2">
    <source>
        <dbReference type="SAM" id="MobiDB-lite"/>
    </source>
</evidence>
<evidence type="ECO:0000305" key="3"/>
<sequence length="146" mass="15729">MTIKLHDLQPARGSKTTRTRVGRGEASKGKTAGRGTKGTKARKQVPVTFEGGQMPIHMRLPKLKGFRNRLRTEYAVVNVGDISRLFPEGGTISVNDLVAKKAIRKNSLVKILGDGKLTVKVTLSAHKFSGSARHKITVAGGSVTEL</sequence>
<name>RL15_MYCLB</name>